<sequence>MLSALRTAGALSTRRLASTQAIASNSEAPKGIATTGTPFLNPSSKAEYALARLDDVMNLAQRGSIWPLTFGLACCAVEMMHFAAPRYDMDRYGVVFRASPRQADLIFVAGTVTNKMAPALRRIYDQMPEAKWVISMGSCANGGGYYHYAYSVLRGCDRVIPVDIYVPGCPPTAEALLYGVLQLQKKIKRKREAQLWYRR</sequence>
<dbReference type="EC" id="7.1.1.2"/>
<dbReference type="EMBL" id="HE600913">
    <property type="protein sequence ID" value="CAP31423.1"/>
    <property type="molecule type" value="Genomic_DNA"/>
</dbReference>
<dbReference type="SMR" id="A8XFG2"/>
<dbReference type="FunCoup" id="A8XFG2">
    <property type="interactions" value="1023"/>
</dbReference>
<dbReference type="STRING" id="6238.A8XFG2"/>
<dbReference type="EnsemblMetazoa" id="CBG12445.1">
    <property type="protein sequence ID" value="CBG12445.1"/>
    <property type="gene ID" value="WBGene00033393"/>
</dbReference>
<dbReference type="KEGG" id="cbr:CBG_12445"/>
<dbReference type="CTD" id="8581712"/>
<dbReference type="WormBase" id="CBG12445">
    <property type="protein sequence ID" value="CBP03002"/>
    <property type="gene ID" value="WBGene00033393"/>
    <property type="gene designation" value="Cbr-nduf-7"/>
</dbReference>
<dbReference type="eggNOG" id="KOG1687">
    <property type="taxonomic scope" value="Eukaryota"/>
</dbReference>
<dbReference type="HOGENOM" id="CLU_055737_1_2_1"/>
<dbReference type="InParanoid" id="A8XFG2"/>
<dbReference type="OMA" id="CGGPYWE"/>
<dbReference type="OrthoDB" id="268400at2759"/>
<dbReference type="Proteomes" id="UP000008549">
    <property type="component" value="Unassembled WGS sequence"/>
</dbReference>
<dbReference type="GO" id="GO:0005739">
    <property type="term" value="C:mitochondrion"/>
    <property type="evidence" value="ECO:0007669"/>
    <property type="project" value="UniProtKB-SubCell"/>
</dbReference>
<dbReference type="GO" id="GO:0045271">
    <property type="term" value="C:respiratory chain complex I"/>
    <property type="evidence" value="ECO:0000318"/>
    <property type="project" value="GO_Central"/>
</dbReference>
<dbReference type="GO" id="GO:0051539">
    <property type="term" value="F:4 iron, 4 sulfur cluster binding"/>
    <property type="evidence" value="ECO:0007669"/>
    <property type="project" value="UniProtKB-KW"/>
</dbReference>
<dbReference type="GO" id="GO:0046872">
    <property type="term" value="F:metal ion binding"/>
    <property type="evidence" value="ECO:0007669"/>
    <property type="project" value="UniProtKB-KW"/>
</dbReference>
<dbReference type="GO" id="GO:0008137">
    <property type="term" value="F:NADH dehydrogenase (ubiquinone) activity"/>
    <property type="evidence" value="ECO:0000318"/>
    <property type="project" value="GO_Central"/>
</dbReference>
<dbReference type="GO" id="GO:0048038">
    <property type="term" value="F:quinone binding"/>
    <property type="evidence" value="ECO:0007669"/>
    <property type="project" value="InterPro"/>
</dbReference>
<dbReference type="GO" id="GO:0009060">
    <property type="term" value="P:aerobic respiration"/>
    <property type="evidence" value="ECO:0000318"/>
    <property type="project" value="GO_Central"/>
</dbReference>
<dbReference type="GO" id="GO:0015990">
    <property type="term" value="P:electron transport coupled proton transport"/>
    <property type="evidence" value="ECO:0000318"/>
    <property type="project" value="GO_Central"/>
</dbReference>
<dbReference type="GO" id="GO:0032981">
    <property type="term" value="P:mitochondrial respiratory chain complex I assembly"/>
    <property type="evidence" value="ECO:0000318"/>
    <property type="project" value="GO_Central"/>
</dbReference>
<dbReference type="FunFam" id="3.40.50.12280:FF:000001">
    <property type="entry name" value="NADH-quinone oxidoreductase subunit B 2"/>
    <property type="match status" value="1"/>
</dbReference>
<dbReference type="Gene3D" id="3.40.50.12280">
    <property type="match status" value="1"/>
</dbReference>
<dbReference type="HAMAP" id="MF_01356">
    <property type="entry name" value="NDH1_NuoB"/>
    <property type="match status" value="1"/>
</dbReference>
<dbReference type="InterPro" id="IPR006137">
    <property type="entry name" value="NADH_UbQ_OxRdtase-like_20kDa"/>
</dbReference>
<dbReference type="InterPro" id="IPR006138">
    <property type="entry name" value="NADH_UQ_OxRdtase_20Kd_su"/>
</dbReference>
<dbReference type="NCBIfam" id="TIGR01957">
    <property type="entry name" value="nuoB_fam"/>
    <property type="match status" value="1"/>
</dbReference>
<dbReference type="NCBIfam" id="NF005012">
    <property type="entry name" value="PRK06411.1"/>
    <property type="match status" value="1"/>
</dbReference>
<dbReference type="PANTHER" id="PTHR11995">
    <property type="entry name" value="NADH DEHYDROGENASE"/>
    <property type="match status" value="1"/>
</dbReference>
<dbReference type="PANTHER" id="PTHR11995:SF14">
    <property type="entry name" value="NADH DEHYDROGENASE [UBIQUINONE] IRON-SULFUR PROTEIN 7, MITOCHONDRIAL"/>
    <property type="match status" value="1"/>
</dbReference>
<dbReference type="Pfam" id="PF01058">
    <property type="entry name" value="Oxidored_q6"/>
    <property type="match status" value="1"/>
</dbReference>
<dbReference type="SUPFAM" id="SSF56770">
    <property type="entry name" value="HydA/Nqo6-like"/>
    <property type="match status" value="1"/>
</dbReference>
<dbReference type="PROSITE" id="PS01150">
    <property type="entry name" value="COMPLEX1_20K"/>
    <property type="match status" value="1"/>
</dbReference>
<proteinExistence type="inferred from homology"/>
<comment type="function">
    <text evidence="1">Core subunit of the mitochondrial membrane respiratory chain NADH dehydrogenase (Complex I) that is believed to belong to the minimal assembly required for catalysis. Complex I functions in the transfer of electrons from NADH to the respiratory chain. The immediate electron acceptor for the enzyme is believed to be ubiquinone (By similarity).</text>
</comment>
<comment type="catalytic activity">
    <reaction evidence="2">
        <text>a ubiquinone + NADH + 5 H(+)(in) = a ubiquinol + NAD(+) + 4 H(+)(out)</text>
        <dbReference type="Rhea" id="RHEA:29091"/>
        <dbReference type="Rhea" id="RHEA-COMP:9565"/>
        <dbReference type="Rhea" id="RHEA-COMP:9566"/>
        <dbReference type="ChEBI" id="CHEBI:15378"/>
        <dbReference type="ChEBI" id="CHEBI:16389"/>
        <dbReference type="ChEBI" id="CHEBI:17976"/>
        <dbReference type="ChEBI" id="CHEBI:57540"/>
        <dbReference type="ChEBI" id="CHEBI:57945"/>
        <dbReference type="EC" id="7.1.1.2"/>
    </reaction>
</comment>
<comment type="cofactor">
    <cofactor evidence="3">
        <name>[4Fe-4S] cluster</name>
        <dbReference type="ChEBI" id="CHEBI:49883"/>
    </cofactor>
    <text evidence="3">Binds 1 [4Fe-4S] cluster.</text>
</comment>
<comment type="subunit">
    <text evidence="1">Complex I is composed of 45 different subunits This is a component of the iron-sulfur (IP) fragment of the enzyme.</text>
</comment>
<comment type="subcellular location">
    <subcellularLocation>
        <location evidence="1">Mitochondrion</location>
    </subcellularLocation>
</comment>
<comment type="similarity">
    <text evidence="3">Belongs to the complex I 20 kDa subunit family.</text>
</comment>
<feature type="transit peptide" description="Mitochondrion" evidence="3">
    <location>
        <begin position="1"/>
        <end position="16"/>
    </location>
</feature>
<feature type="chain" id="PRO_0000395332" description="Probable NADH dehydrogenase [ubiquinone] iron-sulfur protein 7, mitochondrial" evidence="3">
    <location>
        <begin position="17"/>
        <end position="199"/>
    </location>
</feature>
<feature type="binding site" evidence="3">
    <location>
        <position position="74"/>
    </location>
    <ligand>
        <name>[4Fe-4S] cluster</name>
        <dbReference type="ChEBI" id="CHEBI:49883"/>
    </ligand>
</feature>
<feature type="binding site" evidence="3">
    <location>
        <position position="75"/>
    </location>
    <ligand>
        <name>[4Fe-4S] cluster</name>
        <dbReference type="ChEBI" id="CHEBI:49883"/>
    </ligand>
</feature>
<feature type="binding site" evidence="3">
    <location>
        <position position="139"/>
    </location>
    <ligand>
        <name>[4Fe-4S] cluster</name>
        <dbReference type="ChEBI" id="CHEBI:49883"/>
    </ligand>
</feature>
<feature type="binding site" evidence="3">
    <location>
        <position position="169"/>
    </location>
    <ligand>
        <name>[4Fe-4S] cluster</name>
        <dbReference type="ChEBI" id="CHEBI:49883"/>
    </ligand>
</feature>
<evidence type="ECO:0000250" key="1">
    <source>
        <dbReference type="UniProtKB" id="P42026"/>
    </source>
</evidence>
<evidence type="ECO:0000250" key="2">
    <source>
        <dbReference type="UniProtKB" id="Q94360"/>
    </source>
</evidence>
<evidence type="ECO:0000255" key="3"/>
<evidence type="ECO:0000312" key="4">
    <source>
        <dbReference type="EMBL" id="CAP31423.1"/>
    </source>
</evidence>
<gene>
    <name evidence="4" type="primary">nduf-7</name>
    <name type="ORF">CBG12445</name>
</gene>
<accession>A8XFG2</accession>
<name>NDUS7_CAEBR</name>
<reference evidence="4" key="1">
    <citation type="journal article" date="2003" name="PLoS Biol.">
        <title>The genome sequence of Caenorhabditis briggsae: a platform for comparative genomics.</title>
        <authorList>
            <person name="Stein L.D."/>
            <person name="Bao Z."/>
            <person name="Blasiar D."/>
            <person name="Blumenthal T."/>
            <person name="Brent M.R."/>
            <person name="Chen N."/>
            <person name="Chinwalla A."/>
            <person name="Clarke L."/>
            <person name="Clee C."/>
            <person name="Coghlan A."/>
            <person name="Coulson A."/>
            <person name="D'Eustachio P."/>
            <person name="Fitch D.H.A."/>
            <person name="Fulton L.A."/>
            <person name="Fulton R.E."/>
            <person name="Griffiths-Jones S."/>
            <person name="Harris T.W."/>
            <person name="Hillier L.W."/>
            <person name="Kamath R."/>
            <person name="Kuwabara P.E."/>
            <person name="Mardis E.R."/>
            <person name="Marra M.A."/>
            <person name="Miner T.L."/>
            <person name="Minx P."/>
            <person name="Mullikin J.C."/>
            <person name="Plumb R.W."/>
            <person name="Rogers J."/>
            <person name="Schein J.E."/>
            <person name="Sohrmann M."/>
            <person name="Spieth J."/>
            <person name="Stajich J.E."/>
            <person name="Wei C."/>
            <person name="Willey D."/>
            <person name="Wilson R.K."/>
            <person name="Durbin R.M."/>
            <person name="Waterston R.H."/>
        </authorList>
    </citation>
    <scope>NUCLEOTIDE SEQUENCE [LARGE SCALE GENOMIC DNA]</scope>
    <source>
        <strain>AF16</strain>
    </source>
</reference>
<protein>
    <recommendedName>
        <fullName evidence="2">Probable NADH dehydrogenase [ubiquinone] iron-sulfur protein 7, mitochondrial</fullName>
        <ecNumber>7.1.1.2</ecNumber>
    </recommendedName>
</protein>
<organism>
    <name type="scientific">Caenorhabditis briggsae</name>
    <dbReference type="NCBI Taxonomy" id="6238"/>
    <lineage>
        <taxon>Eukaryota</taxon>
        <taxon>Metazoa</taxon>
        <taxon>Ecdysozoa</taxon>
        <taxon>Nematoda</taxon>
        <taxon>Chromadorea</taxon>
        <taxon>Rhabditida</taxon>
        <taxon>Rhabditina</taxon>
        <taxon>Rhabditomorpha</taxon>
        <taxon>Rhabditoidea</taxon>
        <taxon>Rhabditidae</taxon>
        <taxon>Peloderinae</taxon>
        <taxon>Caenorhabditis</taxon>
    </lineage>
</organism>
<keyword id="KW-0004">4Fe-4S</keyword>
<keyword id="KW-0249">Electron transport</keyword>
<keyword id="KW-0408">Iron</keyword>
<keyword id="KW-0411">Iron-sulfur</keyword>
<keyword id="KW-0479">Metal-binding</keyword>
<keyword id="KW-0496">Mitochondrion</keyword>
<keyword id="KW-0520">NAD</keyword>
<keyword id="KW-0560">Oxidoreductase</keyword>
<keyword id="KW-1185">Reference proteome</keyword>
<keyword id="KW-0679">Respiratory chain</keyword>
<keyword id="KW-0809">Transit peptide</keyword>
<keyword id="KW-1278">Translocase</keyword>
<keyword id="KW-0813">Transport</keyword>
<keyword id="KW-0830">Ubiquinone</keyword>